<proteinExistence type="inferred from homology"/>
<accession>B7M8Y8</accession>
<evidence type="ECO:0000255" key="1">
    <source>
        <dbReference type="HAMAP-Rule" id="MF_01017"/>
    </source>
</evidence>
<reference key="1">
    <citation type="journal article" date="2009" name="PLoS Genet.">
        <title>Organised genome dynamics in the Escherichia coli species results in highly diverse adaptive paths.</title>
        <authorList>
            <person name="Touchon M."/>
            <person name="Hoede C."/>
            <person name="Tenaillon O."/>
            <person name="Barbe V."/>
            <person name="Baeriswyl S."/>
            <person name="Bidet P."/>
            <person name="Bingen E."/>
            <person name="Bonacorsi S."/>
            <person name="Bouchier C."/>
            <person name="Bouvet O."/>
            <person name="Calteau A."/>
            <person name="Chiapello H."/>
            <person name="Clermont O."/>
            <person name="Cruveiller S."/>
            <person name="Danchin A."/>
            <person name="Diard M."/>
            <person name="Dossat C."/>
            <person name="Karoui M.E."/>
            <person name="Frapy E."/>
            <person name="Garry L."/>
            <person name="Ghigo J.M."/>
            <person name="Gilles A.M."/>
            <person name="Johnson J."/>
            <person name="Le Bouguenec C."/>
            <person name="Lescat M."/>
            <person name="Mangenot S."/>
            <person name="Martinez-Jehanne V."/>
            <person name="Matic I."/>
            <person name="Nassif X."/>
            <person name="Oztas S."/>
            <person name="Petit M.A."/>
            <person name="Pichon C."/>
            <person name="Rouy Z."/>
            <person name="Ruf C.S."/>
            <person name="Schneider D."/>
            <person name="Tourret J."/>
            <person name="Vacherie B."/>
            <person name="Vallenet D."/>
            <person name="Medigue C."/>
            <person name="Rocha E.P.C."/>
            <person name="Denamur E."/>
        </authorList>
    </citation>
    <scope>NUCLEOTIDE SEQUENCE [LARGE SCALE GENOMIC DNA]</scope>
    <source>
        <strain>IAI1</strain>
    </source>
</reference>
<name>NQOR_ECO8A</name>
<dbReference type="EC" id="1.6.5.2" evidence="1"/>
<dbReference type="EMBL" id="CU928160">
    <property type="protein sequence ID" value="CAQ97912.1"/>
    <property type="molecule type" value="Genomic_DNA"/>
</dbReference>
<dbReference type="SMR" id="B7M8Y8"/>
<dbReference type="KEGG" id="ecr:ECIAI1_1048"/>
<dbReference type="HOGENOM" id="CLU_051402_0_2_6"/>
<dbReference type="GO" id="GO:0016020">
    <property type="term" value="C:membrane"/>
    <property type="evidence" value="ECO:0007669"/>
    <property type="project" value="TreeGrafter"/>
</dbReference>
<dbReference type="GO" id="GO:0050660">
    <property type="term" value="F:flavin adenine dinucleotide binding"/>
    <property type="evidence" value="ECO:0007669"/>
    <property type="project" value="UniProtKB-UniRule"/>
</dbReference>
<dbReference type="GO" id="GO:0010181">
    <property type="term" value="F:FMN binding"/>
    <property type="evidence" value="ECO:0007669"/>
    <property type="project" value="InterPro"/>
</dbReference>
<dbReference type="GO" id="GO:0051287">
    <property type="term" value="F:NAD binding"/>
    <property type="evidence" value="ECO:0007669"/>
    <property type="project" value="UniProtKB-UniRule"/>
</dbReference>
<dbReference type="GO" id="GO:0050136">
    <property type="term" value="F:NADH:ubiquinone reductase (non-electrogenic) activity"/>
    <property type="evidence" value="ECO:0007669"/>
    <property type="project" value="RHEA"/>
</dbReference>
<dbReference type="GO" id="GO:0050661">
    <property type="term" value="F:NADP binding"/>
    <property type="evidence" value="ECO:0007669"/>
    <property type="project" value="UniProtKB-UniRule"/>
</dbReference>
<dbReference type="GO" id="GO:0008753">
    <property type="term" value="F:NADPH dehydrogenase (quinone) activity"/>
    <property type="evidence" value="ECO:0007669"/>
    <property type="project" value="RHEA"/>
</dbReference>
<dbReference type="FunFam" id="3.40.50.360:FF:000004">
    <property type="entry name" value="NAD(P)H dehydrogenase (quinone)"/>
    <property type="match status" value="1"/>
</dbReference>
<dbReference type="Gene3D" id="3.40.50.360">
    <property type="match status" value="1"/>
</dbReference>
<dbReference type="HAMAP" id="MF_01017">
    <property type="entry name" value="NQOR"/>
    <property type="match status" value="1"/>
</dbReference>
<dbReference type="InterPro" id="IPR008254">
    <property type="entry name" value="Flavodoxin/NO_synth"/>
</dbReference>
<dbReference type="InterPro" id="IPR029039">
    <property type="entry name" value="Flavoprotein-like_sf"/>
</dbReference>
<dbReference type="InterPro" id="IPR010089">
    <property type="entry name" value="Flavoprotein_WrbA-like"/>
</dbReference>
<dbReference type="InterPro" id="IPR005025">
    <property type="entry name" value="FMN_Rdtase-like_dom"/>
</dbReference>
<dbReference type="InterPro" id="IPR037513">
    <property type="entry name" value="NQO"/>
</dbReference>
<dbReference type="NCBIfam" id="TIGR01755">
    <property type="entry name" value="flav_wrbA"/>
    <property type="match status" value="1"/>
</dbReference>
<dbReference type="NCBIfam" id="NF002999">
    <property type="entry name" value="PRK03767.1"/>
    <property type="match status" value="1"/>
</dbReference>
<dbReference type="PANTHER" id="PTHR30546">
    <property type="entry name" value="FLAVODOXIN-RELATED PROTEIN WRBA-RELATED"/>
    <property type="match status" value="1"/>
</dbReference>
<dbReference type="PANTHER" id="PTHR30546:SF23">
    <property type="entry name" value="FLAVOPROTEIN-LIKE PROTEIN YCP4-RELATED"/>
    <property type="match status" value="1"/>
</dbReference>
<dbReference type="Pfam" id="PF03358">
    <property type="entry name" value="FMN_red"/>
    <property type="match status" value="1"/>
</dbReference>
<dbReference type="SUPFAM" id="SSF52218">
    <property type="entry name" value="Flavoproteins"/>
    <property type="match status" value="1"/>
</dbReference>
<dbReference type="PROSITE" id="PS50902">
    <property type="entry name" value="FLAVODOXIN_LIKE"/>
    <property type="match status" value="1"/>
</dbReference>
<gene>
    <name type="ordered locus">ECIAI1_1048</name>
</gene>
<comment type="catalytic activity">
    <reaction evidence="1">
        <text>a quinone + NADH + H(+) = a quinol + NAD(+)</text>
        <dbReference type="Rhea" id="RHEA:46160"/>
        <dbReference type="ChEBI" id="CHEBI:15378"/>
        <dbReference type="ChEBI" id="CHEBI:24646"/>
        <dbReference type="ChEBI" id="CHEBI:57540"/>
        <dbReference type="ChEBI" id="CHEBI:57945"/>
        <dbReference type="ChEBI" id="CHEBI:132124"/>
        <dbReference type="EC" id="1.6.5.2"/>
    </reaction>
</comment>
<comment type="catalytic activity">
    <reaction evidence="1">
        <text>a quinone + NADPH + H(+) = a quinol + NADP(+)</text>
        <dbReference type="Rhea" id="RHEA:46164"/>
        <dbReference type="ChEBI" id="CHEBI:15378"/>
        <dbReference type="ChEBI" id="CHEBI:24646"/>
        <dbReference type="ChEBI" id="CHEBI:57783"/>
        <dbReference type="ChEBI" id="CHEBI:58349"/>
        <dbReference type="ChEBI" id="CHEBI:132124"/>
        <dbReference type="EC" id="1.6.5.2"/>
    </reaction>
</comment>
<comment type="cofactor">
    <cofactor evidence="1">
        <name>FMN</name>
        <dbReference type="ChEBI" id="CHEBI:58210"/>
    </cofactor>
    <text evidence="1">Binds 1 FMN per monomer.</text>
</comment>
<comment type="similarity">
    <text evidence="1">Belongs to the WrbA family.</text>
</comment>
<keyword id="KW-0285">Flavoprotein</keyword>
<keyword id="KW-0288">FMN</keyword>
<keyword id="KW-0520">NAD</keyword>
<keyword id="KW-0521">NADP</keyword>
<keyword id="KW-0547">Nucleotide-binding</keyword>
<keyword id="KW-0560">Oxidoreductase</keyword>
<sequence>MAKVLVLYYSMYGHIETMARAVAEGASKVDGAEVVVKRVPETMPPQLFEKAGGKTQTAPVATPQELADYDAIIFGTPTRFGNMSGQMRTFLDQTGGLWASGALYGKLASVFSSTGTGGGQEQTITSTWTTLAHHGMVIVPIGYAAQELFDVSQVRGGTPYGATTIAGGDGSRQPSQEELSIARYQGEYVAGLAVKLNG</sequence>
<organism>
    <name type="scientific">Escherichia coli O8 (strain IAI1)</name>
    <dbReference type="NCBI Taxonomy" id="585034"/>
    <lineage>
        <taxon>Bacteria</taxon>
        <taxon>Pseudomonadati</taxon>
        <taxon>Pseudomonadota</taxon>
        <taxon>Gammaproteobacteria</taxon>
        <taxon>Enterobacterales</taxon>
        <taxon>Enterobacteriaceae</taxon>
        <taxon>Escherichia</taxon>
    </lineage>
</organism>
<feature type="chain" id="PRO_1000200629" description="NAD(P)H dehydrogenase (quinone)">
    <location>
        <begin position="1"/>
        <end position="198"/>
    </location>
</feature>
<feature type="domain" description="Flavodoxin-like" evidence="1">
    <location>
        <begin position="4"/>
        <end position="189"/>
    </location>
</feature>
<feature type="binding site" evidence="1">
    <location>
        <begin position="10"/>
        <end position="15"/>
    </location>
    <ligand>
        <name>FMN</name>
        <dbReference type="ChEBI" id="CHEBI:58210"/>
    </ligand>
</feature>
<feature type="binding site" evidence="1">
    <location>
        <position position="12"/>
    </location>
    <ligand>
        <name>NAD(+)</name>
        <dbReference type="ChEBI" id="CHEBI:57540"/>
    </ligand>
</feature>
<feature type="binding site" evidence="1">
    <location>
        <begin position="78"/>
        <end position="80"/>
    </location>
    <ligand>
        <name>FMN</name>
        <dbReference type="ChEBI" id="CHEBI:58210"/>
    </ligand>
</feature>
<feature type="binding site" evidence="1">
    <location>
        <position position="98"/>
    </location>
    <ligand>
        <name>substrate</name>
    </ligand>
</feature>
<feature type="binding site" evidence="1">
    <location>
        <begin position="113"/>
        <end position="118"/>
    </location>
    <ligand>
        <name>FMN</name>
        <dbReference type="ChEBI" id="CHEBI:58210"/>
    </ligand>
</feature>
<feature type="binding site" evidence="1">
    <location>
        <position position="133"/>
    </location>
    <ligand>
        <name>FMN</name>
        <dbReference type="ChEBI" id="CHEBI:58210"/>
    </ligand>
</feature>
<protein>
    <recommendedName>
        <fullName evidence="1">NAD(P)H dehydrogenase (quinone)</fullName>
        <ecNumber evidence="1">1.6.5.2</ecNumber>
    </recommendedName>
    <alternativeName>
        <fullName>Flavoprotein WrbA</fullName>
    </alternativeName>
    <alternativeName>
        <fullName evidence="1">NAD(P)H:quinone oxidoreductase</fullName>
        <shortName evidence="1">NQO</shortName>
    </alternativeName>
</protein>